<dbReference type="EC" id="5.3.1.1" evidence="1 2"/>
<dbReference type="EMBL" id="AE000511">
    <property type="protein sequence ID" value="AAD07261.1"/>
    <property type="molecule type" value="Genomic_DNA"/>
</dbReference>
<dbReference type="PIR" id="B64544">
    <property type="entry name" value="B64544"/>
</dbReference>
<dbReference type="RefSeq" id="NP_206993.1">
    <property type="nucleotide sequence ID" value="NC_000915.1"/>
</dbReference>
<dbReference type="RefSeq" id="WP_000160988.1">
    <property type="nucleotide sequence ID" value="NC_018939.1"/>
</dbReference>
<dbReference type="PDB" id="2JGQ">
    <property type="method" value="X-ray"/>
    <property type="resolution" value="2.30 A"/>
    <property type="chains" value="A/B=2-234"/>
</dbReference>
<dbReference type="PDBsum" id="2JGQ"/>
<dbReference type="SMR" id="P56076"/>
<dbReference type="DIP" id="DIP-3273N"/>
<dbReference type="FunCoup" id="P56076">
    <property type="interactions" value="362"/>
</dbReference>
<dbReference type="IntAct" id="P56076">
    <property type="interactions" value="5"/>
</dbReference>
<dbReference type="MINT" id="P56076"/>
<dbReference type="STRING" id="85962.HP_0194"/>
<dbReference type="PaxDb" id="85962-C694_00965"/>
<dbReference type="EnsemblBacteria" id="AAD07261">
    <property type="protein sequence ID" value="AAD07261"/>
    <property type="gene ID" value="HP_0194"/>
</dbReference>
<dbReference type="KEGG" id="heo:C694_00965"/>
<dbReference type="KEGG" id="hpy:HP_0194"/>
<dbReference type="PATRIC" id="fig|85962.47.peg.209"/>
<dbReference type="eggNOG" id="COG0149">
    <property type="taxonomic scope" value="Bacteria"/>
</dbReference>
<dbReference type="InParanoid" id="P56076"/>
<dbReference type="OrthoDB" id="9809429at2"/>
<dbReference type="PhylomeDB" id="P56076"/>
<dbReference type="BRENDA" id="5.3.1.1">
    <property type="organism ID" value="2604"/>
</dbReference>
<dbReference type="SABIO-RK" id="P56076"/>
<dbReference type="UniPathway" id="UPA00109">
    <property type="reaction ID" value="UER00189"/>
</dbReference>
<dbReference type="UniPathway" id="UPA00138"/>
<dbReference type="EvolutionaryTrace" id="P56076"/>
<dbReference type="Proteomes" id="UP000000429">
    <property type="component" value="Chromosome"/>
</dbReference>
<dbReference type="GO" id="GO:0005829">
    <property type="term" value="C:cytosol"/>
    <property type="evidence" value="ECO:0000318"/>
    <property type="project" value="GO_Central"/>
</dbReference>
<dbReference type="GO" id="GO:0004807">
    <property type="term" value="F:triose-phosphate isomerase activity"/>
    <property type="evidence" value="ECO:0000318"/>
    <property type="project" value="GO_Central"/>
</dbReference>
<dbReference type="GO" id="GO:0006094">
    <property type="term" value="P:gluconeogenesis"/>
    <property type="evidence" value="ECO:0000318"/>
    <property type="project" value="GO_Central"/>
</dbReference>
<dbReference type="GO" id="GO:0046166">
    <property type="term" value="P:glyceraldehyde-3-phosphate biosynthetic process"/>
    <property type="evidence" value="ECO:0000318"/>
    <property type="project" value="GO_Central"/>
</dbReference>
<dbReference type="GO" id="GO:0019563">
    <property type="term" value="P:glycerol catabolic process"/>
    <property type="evidence" value="ECO:0000318"/>
    <property type="project" value="GO_Central"/>
</dbReference>
<dbReference type="GO" id="GO:0006096">
    <property type="term" value="P:glycolytic process"/>
    <property type="evidence" value="ECO:0000318"/>
    <property type="project" value="GO_Central"/>
</dbReference>
<dbReference type="CDD" id="cd00311">
    <property type="entry name" value="TIM"/>
    <property type="match status" value="1"/>
</dbReference>
<dbReference type="FunFam" id="3.20.20.70:FF:000293">
    <property type="entry name" value="Triosephosphate isomerase"/>
    <property type="match status" value="1"/>
</dbReference>
<dbReference type="Gene3D" id="3.20.20.70">
    <property type="entry name" value="Aldolase class I"/>
    <property type="match status" value="1"/>
</dbReference>
<dbReference type="HAMAP" id="MF_00147_B">
    <property type="entry name" value="TIM_B"/>
    <property type="match status" value="1"/>
</dbReference>
<dbReference type="InterPro" id="IPR013785">
    <property type="entry name" value="Aldolase_TIM"/>
</dbReference>
<dbReference type="InterPro" id="IPR035990">
    <property type="entry name" value="TIM_sf"/>
</dbReference>
<dbReference type="InterPro" id="IPR022896">
    <property type="entry name" value="TrioseP_Isoase_bac/euk"/>
</dbReference>
<dbReference type="InterPro" id="IPR000652">
    <property type="entry name" value="Triosephosphate_isomerase"/>
</dbReference>
<dbReference type="InterPro" id="IPR020861">
    <property type="entry name" value="Triosephosphate_isomerase_AS"/>
</dbReference>
<dbReference type="NCBIfam" id="NF000728">
    <property type="entry name" value="PRK00042.3-2"/>
    <property type="match status" value="1"/>
</dbReference>
<dbReference type="NCBIfam" id="NF000729">
    <property type="entry name" value="PRK00042.3-3"/>
    <property type="match status" value="1"/>
</dbReference>
<dbReference type="PANTHER" id="PTHR21139">
    <property type="entry name" value="TRIOSEPHOSPHATE ISOMERASE"/>
    <property type="match status" value="1"/>
</dbReference>
<dbReference type="PANTHER" id="PTHR21139:SF42">
    <property type="entry name" value="TRIOSEPHOSPHATE ISOMERASE"/>
    <property type="match status" value="1"/>
</dbReference>
<dbReference type="Pfam" id="PF00121">
    <property type="entry name" value="TIM"/>
    <property type="match status" value="1"/>
</dbReference>
<dbReference type="SUPFAM" id="SSF51351">
    <property type="entry name" value="Triosephosphate isomerase (TIM)"/>
    <property type="match status" value="1"/>
</dbReference>
<dbReference type="PROSITE" id="PS00171">
    <property type="entry name" value="TIM_1"/>
    <property type="match status" value="1"/>
</dbReference>
<dbReference type="PROSITE" id="PS51440">
    <property type="entry name" value="TIM_2"/>
    <property type="match status" value="1"/>
</dbReference>
<feature type="chain" id="PRO_0000090228" description="Triosephosphate isomerase">
    <location>
        <begin position="1"/>
        <end position="234"/>
    </location>
</feature>
<feature type="active site" description="Electrophile" evidence="1">
    <location>
        <position position="90"/>
    </location>
</feature>
<feature type="active site" description="Proton acceptor" evidence="1">
    <location>
        <position position="159"/>
    </location>
</feature>
<feature type="binding site" evidence="1 2">
    <location>
        <begin position="8"/>
        <end position="10"/>
    </location>
    <ligand>
        <name>substrate</name>
    </ligand>
</feature>
<feature type="binding site" evidence="1 2">
    <location>
        <position position="165"/>
    </location>
    <ligand>
        <name>substrate</name>
    </ligand>
</feature>
<feature type="binding site" evidence="1 2">
    <location>
        <position position="197"/>
    </location>
    <ligand>
        <name>substrate</name>
    </ligand>
</feature>
<feature type="binding site" evidence="1 2">
    <location>
        <begin position="218"/>
        <end position="219"/>
    </location>
    <ligand>
        <name>substrate</name>
    </ligand>
</feature>
<feature type="mutagenesis site" description="3-fold decrease of the affinity and slight decrease of the catalytic efficiency." evidence="2">
    <original>K</original>
    <variation>A</variation>
    <location>
        <position position="183"/>
    </location>
</feature>
<feature type="mutagenesis site" description="The affinity and the catalytic efficiency are comparable to the wild-type." evidence="2">
    <original>K</original>
    <variation>S</variation>
    <location>
        <position position="183"/>
    </location>
</feature>
<feature type="mutagenesis site" description="The affinity and the catalytic efficiency are comparable to the wild-type." evidence="2">
    <original>D</original>
    <variation>A</variation>
    <location>
        <position position="213"/>
    </location>
</feature>
<feature type="mutagenesis site" description="The affinity and the catalytic efficiency are comparable to the wild-type." evidence="2">
    <original>D</original>
    <variation>Q</variation>
    <location>
        <position position="213"/>
    </location>
</feature>
<feature type="strand" evidence="4">
    <location>
        <begin position="4"/>
        <end position="8"/>
    </location>
</feature>
<feature type="helix" evidence="4">
    <location>
        <begin position="15"/>
        <end position="28"/>
    </location>
</feature>
<feature type="helix" evidence="4">
    <location>
        <begin position="31"/>
        <end position="33"/>
    </location>
</feature>
<feature type="turn" evidence="4">
    <location>
        <begin position="34"/>
        <end position="36"/>
    </location>
</feature>
<feature type="strand" evidence="4">
    <location>
        <begin position="37"/>
        <end position="40"/>
    </location>
</feature>
<feature type="turn" evidence="4">
    <location>
        <begin position="43"/>
        <end position="45"/>
    </location>
</feature>
<feature type="strand" evidence="4">
    <location>
        <begin position="52"/>
        <end position="56"/>
    </location>
</feature>
<feature type="strand" evidence="4">
    <location>
        <begin position="62"/>
        <end position="68"/>
    </location>
</feature>
<feature type="helix" evidence="4">
    <location>
        <begin position="75"/>
        <end position="80"/>
    </location>
</feature>
<feature type="strand" evidence="4">
    <location>
        <begin position="85"/>
        <end position="88"/>
    </location>
</feature>
<feature type="helix" evidence="4">
    <location>
        <begin position="91"/>
        <end position="95"/>
    </location>
</feature>
<feature type="helix" evidence="4">
    <location>
        <begin position="101"/>
        <end position="113"/>
    </location>
</feature>
<feature type="strand" evidence="4">
    <location>
        <begin position="117"/>
        <end position="122"/>
    </location>
</feature>
<feature type="helix" evidence="4">
    <location>
        <begin position="126"/>
        <end position="131"/>
    </location>
</feature>
<feature type="helix" evidence="4">
    <location>
        <begin position="133"/>
        <end position="144"/>
    </location>
</feature>
<feature type="strand" evidence="4">
    <location>
        <begin position="154"/>
        <end position="158"/>
    </location>
</feature>
<feature type="helix" evidence="4">
    <location>
        <begin position="161"/>
        <end position="163"/>
    </location>
</feature>
<feature type="helix" evidence="4">
    <location>
        <begin position="172"/>
        <end position="185"/>
    </location>
</feature>
<feature type="strand" evidence="4">
    <location>
        <begin position="192"/>
        <end position="197"/>
    </location>
</feature>
<feature type="turn" evidence="4">
    <location>
        <begin position="200"/>
        <end position="202"/>
    </location>
</feature>
<feature type="helix" evidence="4">
    <location>
        <begin position="203"/>
        <end position="207"/>
    </location>
</feature>
<feature type="strand" evidence="4">
    <location>
        <begin position="214"/>
        <end position="218"/>
    </location>
</feature>
<feature type="helix" evidence="4">
    <location>
        <begin position="219"/>
        <end position="222"/>
    </location>
</feature>
<feature type="helix" evidence="4">
    <location>
        <begin position="224"/>
        <end position="231"/>
    </location>
</feature>
<reference key="1">
    <citation type="journal article" date="1997" name="Nature">
        <title>The complete genome sequence of the gastric pathogen Helicobacter pylori.</title>
        <authorList>
            <person name="Tomb J.-F."/>
            <person name="White O."/>
            <person name="Kerlavage A.R."/>
            <person name="Clayton R.A."/>
            <person name="Sutton G.G."/>
            <person name="Fleischmann R.D."/>
            <person name="Ketchum K.A."/>
            <person name="Klenk H.-P."/>
            <person name="Gill S.R."/>
            <person name="Dougherty B.A."/>
            <person name="Nelson K.E."/>
            <person name="Quackenbush J."/>
            <person name="Zhou L."/>
            <person name="Kirkness E.F."/>
            <person name="Peterson S.N."/>
            <person name="Loftus B.J."/>
            <person name="Richardson D.L."/>
            <person name="Dodson R.J."/>
            <person name="Khalak H.G."/>
            <person name="Glodek A."/>
            <person name="McKenney K."/>
            <person name="FitzGerald L.M."/>
            <person name="Lee N."/>
            <person name="Adams M.D."/>
            <person name="Hickey E.K."/>
            <person name="Berg D.E."/>
            <person name="Gocayne J.D."/>
            <person name="Utterback T.R."/>
            <person name="Peterson J.D."/>
            <person name="Kelley J.M."/>
            <person name="Cotton M.D."/>
            <person name="Weidman J.F."/>
            <person name="Fujii C."/>
            <person name="Bowman C."/>
            <person name="Watthey L."/>
            <person name="Wallin E."/>
            <person name="Hayes W.S."/>
            <person name="Borodovsky M."/>
            <person name="Karp P.D."/>
            <person name="Smith H.O."/>
            <person name="Fraser C.M."/>
            <person name="Venter J.C."/>
        </authorList>
    </citation>
    <scope>NUCLEOTIDE SEQUENCE [LARGE SCALE GENOMIC DNA]</scope>
    <source>
        <strain>ATCC 700392 / 26695</strain>
    </source>
</reference>
<reference key="2">
    <citation type="journal article" date="2008" name="Proteins">
        <title>Kinetic and structural properties of triosephosphate isomerase from Helicobacter pylori.</title>
        <authorList>
            <person name="Chu C.H."/>
            <person name="Lai Y.J."/>
            <person name="Huang H."/>
            <person name="Sun Y.J."/>
        </authorList>
    </citation>
    <scope>X-RAY CRYSTALLOGRAPHY (2.30 ANGSTROMS) OF 2-234 IN COMPLEX WITH SUBSTRATE ANALOG</scope>
    <scope>FUNCTION</scope>
    <scope>CATALYTIC ACTIVITY</scope>
    <scope>BIOPHYSICOCHEMICAL PROPERTIES</scope>
    <scope>MUTAGENESIS OF LYS-183 AND ASP-213</scope>
    <scope>MASS SPECTROMETRY</scope>
    <scope>SUBUNIT</scope>
</reference>
<keyword id="KW-0002">3D-structure</keyword>
<keyword id="KW-0963">Cytoplasm</keyword>
<keyword id="KW-0312">Gluconeogenesis</keyword>
<keyword id="KW-0324">Glycolysis</keyword>
<keyword id="KW-0413">Isomerase</keyword>
<keyword id="KW-1185">Reference proteome</keyword>
<comment type="function">
    <text evidence="1 2">Involved in the gluconeogenesis. Catalyzes stereospecifically the conversion of dihydroxyacetone phosphate (DHAP) to D-glyceraldehyde-3-phosphate (G3P).</text>
</comment>
<comment type="catalytic activity">
    <reaction evidence="1 2">
        <text>D-glyceraldehyde 3-phosphate = dihydroxyacetone phosphate</text>
        <dbReference type="Rhea" id="RHEA:18585"/>
        <dbReference type="ChEBI" id="CHEBI:57642"/>
        <dbReference type="ChEBI" id="CHEBI:59776"/>
        <dbReference type="EC" id="5.3.1.1"/>
    </reaction>
</comment>
<comment type="biophysicochemical properties">
    <kinetics>
        <KM evidence="2">3.46 uM for D-glyceraldehyde 3-phosphate (at pH 7.5 and 25 degrees Celsius)</KM>
        <text evidence="2">kcat is 88000 min(-1) for isomerase activity with D-glyceraldehyde 3-phosphate as substrate (at pH 7.5 and 25 degrees Celsius).</text>
    </kinetics>
</comment>
<comment type="pathway">
    <text evidence="1">Carbohydrate biosynthesis; gluconeogenesis.</text>
</comment>
<comment type="pathway">
    <text evidence="1">Carbohydrate degradation; glycolysis; D-glyceraldehyde 3-phosphate from glycerone phosphate: step 1/1.</text>
</comment>
<comment type="subunit">
    <text evidence="1 2">Homodimer.</text>
</comment>
<comment type="subcellular location">
    <subcellularLocation>
        <location evidence="1">Cytoplasm</location>
    </subcellularLocation>
</comment>
<comment type="mass spectrometry"/>
<comment type="similarity">
    <text evidence="1">Belongs to the triosephosphate isomerase family.</text>
</comment>
<name>TPIS_HELPY</name>
<evidence type="ECO:0000255" key="1">
    <source>
        <dbReference type="HAMAP-Rule" id="MF_00147"/>
    </source>
</evidence>
<evidence type="ECO:0000269" key="2">
    <source>
    </source>
</evidence>
<evidence type="ECO:0000303" key="3">
    <source>
    </source>
</evidence>
<evidence type="ECO:0007829" key="4">
    <source>
        <dbReference type="PDB" id="2JGQ"/>
    </source>
</evidence>
<protein>
    <recommendedName>
        <fullName evidence="1 3">Triosephosphate isomerase</fullName>
        <shortName evidence="1 3">TIM</shortName>
        <shortName evidence="1">TPI</shortName>
        <ecNumber evidence="1 2">5.3.1.1</ecNumber>
    </recommendedName>
    <alternativeName>
        <fullName evidence="1 3">Triose-phosphate isomerase</fullName>
    </alternativeName>
</protein>
<sequence>MTKIAMANFKSAMPIFKSHAYLKELEKTLKPQHFDRVFVFPDFFGLLPNSFLHFTLGVQNAYPRDCGAFTGEITSKHLEELKIHTLLIGHSERRTLLKESPSFLKEKFDFFKSKNFKIVYCIGEELTTREKGFKAVKEFLSEQLENIDLNYPNLVVAYEPIWAIGTKKSASLEDIYLTHGFLKQILNQKTPLLYGGSVNTQNAKEILGIDSVDGLLIGSASWELENFKTIISFL</sequence>
<accession>P56076</accession>
<organism>
    <name type="scientific">Helicobacter pylori (strain ATCC 700392 / 26695)</name>
    <name type="common">Campylobacter pylori</name>
    <dbReference type="NCBI Taxonomy" id="85962"/>
    <lineage>
        <taxon>Bacteria</taxon>
        <taxon>Pseudomonadati</taxon>
        <taxon>Campylobacterota</taxon>
        <taxon>Epsilonproteobacteria</taxon>
        <taxon>Campylobacterales</taxon>
        <taxon>Helicobacteraceae</taxon>
        <taxon>Helicobacter</taxon>
    </lineage>
</organism>
<proteinExistence type="evidence at protein level"/>
<gene>
    <name evidence="1" type="primary">tpiA</name>
    <name type="synonym">tpi</name>
    <name type="ordered locus">HP_0194</name>
</gene>